<keyword id="KW-0571">Peptide transport</keyword>
<keyword id="KW-0653">Protein transport</keyword>
<keyword id="KW-0732">Signal</keyword>
<keyword id="KW-0813">Transport</keyword>
<accession>A0A0H2ZGN2</accession>
<sequence>MRKILPLRAWLAAGLILGSPFSHAASNLVFCSEGSPAGFDPAQYTTGTDYDATSVTLFNRLVQFERGGTRAIPALAESWDIGDDGKTYTFHLRKGVKFHSTDYFKPTREFNADDVLFTFERMLDKNHPFRKAYPTEFPYFTDMGLDKNIARVEKLDEHRVKFTLNEVDAAFIQNLAMDVASIQSAEYAGQLLEAGKPQQINQKPIGTGPFILSRYQKDAQIRFKGNKDYWKPEDVKIDNLIFSINTDAAVRAQKLKAGECQITLNPRPADLKALQEAANLKVPSQPGFNLGYIAYNVTHKPFDQLEVRQALDMAVNKQAIIDAVYQGAGQLAVNGMPPTQWSYDETIKDAPFDPAKARELLKKAGVAEGTEITLWAMPVQRPYNPNAKLMAEMIQADWAKIGIKARIVSYEWGEYIKRAHAGEHDAMLFGWTGDNGDPDNWLATLYGCDSINGNNVSKWCDAAYDKLVKAAKRVSDQDKRSELYKQAQHILKEQVPITPIAHSTVYQPMNKSVHDFKISPFSRNAFYGVTNQP</sequence>
<protein>
    <recommendedName>
        <fullName evidence="4">Di/tripeptide-binding protein 3</fullName>
    </recommendedName>
</protein>
<gene>
    <name evidence="3" type="primary">dppA3</name>
    <name evidence="5" type="ordered locus">PA14_58390</name>
</gene>
<evidence type="ECO:0000255" key="1"/>
<evidence type="ECO:0000269" key="2">
    <source>
    </source>
</evidence>
<evidence type="ECO:0000303" key="3">
    <source>
    </source>
</evidence>
<evidence type="ECO:0000305" key="4"/>
<evidence type="ECO:0000312" key="5">
    <source>
        <dbReference type="EMBL" id="ABJ13767.1"/>
    </source>
</evidence>
<reference key="1">
    <citation type="journal article" date="2006" name="Genome Biol.">
        <title>Genomic analysis reveals that Pseudomonas aeruginosa virulence is combinatorial.</title>
        <authorList>
            <person name="Lee D.G."/>
            <person name="Urbach J.M."/>
            <person name="Wu G."/>
            <person name="Liberati N.T."/>
            <person name="Feinbaum R.L."/>
            <person name="Miyata S."/>
            <person name="Diggins L.T."/>
            <person name="He J."/>
            <person name="Saucier M."/>
            <person name="Deziel E."/>
            <person name="Friedman L."/>
            <person name="Li L."/>
            <person name="Grills G."/>
            <person name="Montgomery K."/>
            <person name="Kucherlapati R."/>
            <person name="Rahme L.G."/>
            <person name="Ausubel F.M."/>
        </authorList>
    </citation>
    <scope>NUCLEOTIDE SEQUENCE [LARGE SCALE GENOMIC DNA]</scope>
    <source>
        <strain>UCBPP-PA14</strain>
    </source>
</reference>
<reference key="2">
    <citation type="journal article" date="2014" name="PLoS ONE">
        <title>High-throughput screening of dipeptide utilization mediated by the ABC transporter DppBCDF and its substrate-binding proteins DppA1-A5 in Pseudomonas aeruginosa.</title>
        <authorList>
            <person name="Pletzer D."/>
            <person name="Lafon C."/>
            <person name="Braun Y."/>
            <person name="Koehler T."/>
            <person name="Page M.G."/>
            <person name="Mourez M."/>
            <person name="Weingart H."/>
        </authorList>
    </citation>
    <scope>FUNCTION</scope>
    <scope>SUBUNIT</scope>
    <source>
        <strain>UCBPP-PA14</strain>
    </source>
</reference>
<feature type="signal peptide" evidence="1">
    <location>
        <begin position="1"/>
        <end position="24"/>
    </location>
</feature>
<feature type="chain" id="PRO_0000452190" description="Di/tripeptide-binding protein 3">
    <location>
        <begin position="25"/>
        <end position="533"/>
    </location>
</feature>
<comment type="function">
    <text evidence="2">Part of the ABC transporter DppABCDF involved in the uptake of various di/tripeptides (PubMed:25338022). Prefers dipeptides with acidic residues at the C-terminal end. Involved in the uptake of phaseolotoxin, a toxic tripeptide inhibiting the enzyme ornithine carbamoyltransferase (PubMed:25338022).</text>
</comment>
<comment type="subunit">
    <text evidence="2">The complex is composed of two ATP-binding proteins (DppD and DppF), two transmembrane proteins (DppB and DppC) and a solute-binding protein (DppA3) (PubMed:25338022). Five orthologous SBPs (DppA1-A5) are present in P.aeruginosa, which increases the substrate specificity of the DppBCDF transporter (PubMed:25338022).</text>
</comment>
<comment type="similarity">
    <text evidence="4">Belongs to the bacterial solute-binding protein 5 family.</text>
</comment>
<organism>
    <name type="scientific">Pseudomonas aeruginosa (strain UCBPP-PA14)</name>
    <dbReference type="NCBI Taxonomy" id="208963"/>
    <lineage>
        <taxon>Bacteria</taxon>
        <taxon>Pseudomonadati</taxon>
        <taxon>Pseudomonadota</taxon>
        <taxon>Gammaproteobacteria</taxon>
        <taxon>Pseudomonadales</taxon>
        <taxon>Pseudomonadaceae</taxon>
        <taxon>Pseudomonas</taxon>
    </lineage>
</organism>
<name>DPPA3_PSEAB</name>
<dbReference type="EMBL" id="CP000438">
    <property type="protein sequence ID" value="ABJ13767.1"/>
    <property type="molecule type" value="Genomic_DNA"/>
</dbReference>
<dbReference type="RefSeq" id="WP_003141334.1">
    <property type="nucleotide sequence ID" value="NZ_CP034244.1"/>
</dbReference>
<dbReference type="SMR" id="A0A0H2ZGN2"/>
<dbReference type="KEGG" id="pau:PA14_58390"/>
<dbReference type="HOGENOM" id="CLU_017028_7_0_6"/>
<dbReference type="BioCyc" id="PAER208963:G1G74-4918-MONOMER"/>
<dbReference type="Proteomes" id="UP000000653">
    <property type="component" value="Chromosome"/>
</dbReference>
<dbReference type="GO" id="GO:0043190">
    <property type="term" value="C:ATP-binding cassette (ABC) transporter complex"/>
    <property type="evidence" value="ECO:0007669"/>
    <property type="project" value="InterPro"/>
</dbReference>
<dbReference type="GO" id="GO:0030288">
    <property type="term" value="C:outer membrane-bounded periplasmic space"/>
    <property type="evidence" value="ECO:0007669"/>
    <property type="project" value="TreeGrafter"/>
</dbReference>
<dbReference type="GO" id="GO:1904680">
    <property type="term" value="F:peptide transmembrane transporter activity"/>
    <property type="evidence" value="ECO:0007669"/>
    <property type="project" value="TreeGrafter"/>
</dbReference>
<dbReference type="GO" id="GO:0042938">
    <property type="term" value="P:dipeptide transport"/>
    <property type="evidence" value="ECO:0007669"/>
    <property type="project" value="TreeGrafter"/>
</dbReference>
<dbReference type="GO" id="GO:0015031">
    <property type="term" value="P:protein transport"/>
    <property type="evidence" value="ECO:0007669"/>
    <property type="project" value="UniProtKB-KW"/>
</dbReference>
<dbReference type="CDD" id="cd08493">
    <property type="entry name" value="PBP2_DppA_like"/>
    <property type="match status" value="1"/>
</dbReference>
<dbReference type="FunFam" id="3.10.105.10:FF:000002">
    <property type="entry name" value="Dipeptide ABC transporter, substrate-binding protein"/>
    <property type="match status" value="1"/>
</dbReference>
<dbReference type="FunFam" id="3.40.190.10:FF:000036">
    <property type="entry name" value="Dipeptide ABC transporter, substrate-binding protein"/>
    <property type="match status" value="1"/>
</dbReference>
<dbReference type="FunFam" id="3.90.76.10:FF:000002">
    <property type="entry name" value="Dipeptide ABC transporter, substrate-binding protein"/>
    <property type="match status" value="1"/>
</dbReference>
<dbReference type="Gene3D" id="3.90.76.10">
    <property type="entry name" value="Dipeptide-binding Protein, Domain 1"/>
    <property type="match status" value="1"/>
</dbReference>
<dbReference type="Gene3D" id="3.10.105.10">
    <property type="entry name" value="Dipeptide-binding Protein, Domain 3"/>
    <property type="match status" value="1"/>
</dbReference>
<dbReference type="Gene3D" id="3.40.190.10">
    <property type="entry name" value="Periplasmic binding protein-like II"/>
    <property type="match status" value="1"/>
</dbReference>
<dbReference type="InterPro" id="IPR030678">
    <property type="entry name" value="Peptide/Ni-bd"/>
</dbReference>
<dbReference type="InterPro" id="IPR039424">
    <property type="entry name" value="SBP_5"/>
</dbReference>
<dbReference type="InterPro" id="IPR023765">
    <property type="entry name" value="SBP_5_CS"/>
</dbReference>
<dbReference type="InterPro" id="IPR000914">
    <property type="entry name" value="SBP_5_dom"/>
</dbReference>
<dbReference type="PANTHER" id="PTHR30290:SF38">
    <property type="entry name" value="D,D-DIPEPTIDE-BINDING PERIPLASMIC PROTEIN DDPA-RELATED"/>
    <property type="match status" value="1"/>
</dbReference>
<dbReference type="PANTHER" id="PTHR30290">
    <property type="entry name" value="PERIPLASMIC BINDING COMPONENT OF ABC TRANSPORTER"/>
    <property type="match status" value="1"/>
</dbReference>
<dbReference type="Pfam" id="PF00496">
    <property type="entry name" value="SBP_bac_5"/>
    <property type="match status" value="1"/>
</dbReference>
<dbReference type="PIRSF" id="PIRSF002741">
    <property type="entry name" value="MppA"/>
    <property type="match status" value="1"/>
</dbReference>
<dbReference type="SUPFAM" id="SSF53850">
    <property type="entry name" value="Periplasmic binding protein-like II"/>
    <property type="match status" value="1"/>
</dbReference>
<dbReference type="PROSITE" id="PS01040">
    <property type="entry name" value="SBP_BACTERIAL_5"/>
    <property type="match status" value="1"/>
</dbReference>
<proteinExistence type="evidence at protein level"/>